<dbReference type="EC" id="2.4.2.17" evidence="1"/>
<dbReference type="EMBL" id="CU928161">
    <property type="protein sequence ID" value="CAR03406.1"/>
    <property type="molecule type" value="Genomic_DNA"/>
</dbReference>
<dbReference type="RefSeq" id="WP_000131782.1">
    <property type="nucleotide sequence ID" value="NC_011742.1"/>
</dbReference>
<dbReference type="SMR" id="B7MDH3"/>
<dbReference type="GeneID" id="93775154"/>
<dbReference type="KEGG" id="ecz:ECS88_2118"/>
<dbReference type="HOGENOM" id="CLU_038115_1_0_6"/>
<dbReference type="UniPathway" id="UPA00031">
    <property type="reaction ID" value="UER00006"/>
</dbReference>
<dbReference type="Proteomes" id="UP000000747">
    <property type="component" value="Chromosome"/>
</dbReference>
<dbReference type="GO" id="GO:0005737">
    <property type="term" value="C:cytoplasm"/>
    <property type="evidence" value="ECO:0007669"/>
    <property type="project" value="UniProtKB-SubCell"/>
</dbReference>
<dbReference type="GO" id="GO:0005524">
    <property type="term" value="F:ATP binding"/>
    <property type="evidence" value="ECO:0007669"/>
    <property type="project" value="UniProtKB-KW"/>
</dbReference>
<dbReference type="GO" id="GO:0003879">
    <property type="term" value="F:ATP phosphoribosyltransferase activity"/>
    <property type="evidence" value="ECO:0007669"/>
    <property type="project" value="UniProtKB-UniRule"/>
</dbReference>
<dbReference type="GO" id="GO:0000287">
    <property type="term" value="F:magnesium ion binding"/>
    <property type="evidence" value="ECO:0007669"/>
    <property type="project" value="UniProtKB-UniRule"/>
</dbReference>
<dbReference type="GO" id="GO:0000105">
    <property type="term" value="P:L-histidine biosynthetic process"/>
    <property type="evidence" value="ECO:0007669"/>
    <property type="project" value="UniProtKB-UniRule"/>
</dbReference>
<dbReference type="CDD" id="cd13592">
    <property type="entry name" value="PBP2_HisGL2"/>
    <property type="match status" value="1"/>
</dbReference>
<dbReference type="FunFam" id="3.30.70.120:FF:000002">
    <property type="entry name" value="ATP phosphoribosyltransferase"/>
    <property type="match status" value="1"/>
</dbReference>
<dbReference type="FunFam" id="3.40.190.10:FF:000008">
    <property type="entry name" value="ATP phosphoribosyltransferase"/>
    <property type="match status" value="1"/>
</dbReference>
<dbReference type="Gene3D" id="3.30.70.120">
    <property type="match status" value="1"/>
</dbReference>
<dbReference type="Gene3D" id="3.40.190.10">
    <property type="entry name" value="Periplasmic binding protein-like II"/>
    <property type="match status" value="2"/>
</dbReference>
<dbReference type="HAMAP" id="MF_00079">
    <property type="entry name" value="HisG_Long"/>
    <property type="match status" value="1"/>
</dbReference>
<dbReference type="InterPro" id="IPR020621">
    <property type="entry name" value="ATP-PRT_HisG_long"/>
</dbReference>
<dbReference type="InterPro" id="IPR013820">
    <property type="entry name" value="ATP_PRibTrfase_cat"/>
</dbReference>
<dbReference type="InterPro" id="IPR018198">
    <property type="entry name" value="ATP_PRibTrfase_CS"/>
</dbReference>
<dbReference type="InterPro" id="IPR001348">
    <property type="entry name" value="ATP_PRibTrfase_HisG"/>
</dbReference>
<dbReference type="InterPro" id="IPR013115">
    <property type="entry name" value="HisG_C"/>
</dbReference>
<dbReference type="InterPro" id="IPR011322">
    <property type="entry name" value="N-reg_PII-like_a/b"/>
</dbReference>
<dbReference type="InterPro" id="IPR015867">
    <property type="entry name" value="N-reg_PII/ATP_PRibTrfase_C"/>
</dbReference>
<dbReference type="NCBIfam" id="TIGR00070">
    <property type="entry name" value="hisG"/>
    <property type="match status" value="1"/>
</dbReference>
<dbReference type="NCBIfam" id="TIGR03455">
    <property type="entry name" value="HisG_C-term"/>
    <property type="match status" value="1"/>
</dbReference>
<dbReference type="PANTHER" id="PTHR21403:SF8">
    <property type="entry name" value="ATP PHOSPHORIBOSYLTRANSFERASE"/>
    <property type="match status" value="1"/>
</dbReference>
<dbReference type="PANTHER" id="PTHR21403">
    <property type="entry name" value="ATP PHOSPHORIBOSYLTRANSFERASE ATP-PRTASE"/>
    <property type="match status" value="1"/>
</dbReference>
<dbReference type="Pfam" id="PF01634">
    <property type="entry name" value="HisG"/>
    <property type="match status" value="1"/>
</dbReference>
<dbReference type="Pfam" id="PF08029">
    <property type="entry name" value="HisG_C"/>
    <property type="match status" value="1"/>
</dbReference>
<dbReference type="SUPFAM" id="SSF54913">
    <property type="entry name" value="GlnB-like"/>
    <property type="match status" value="1"/>
</dbReference>
<dbReference type="SUPFAM" id="SSF53850">
    <property type="entry name" value="Periplasmic binding protein-like II"/>
    <property type="match status" value="1"/>
</dbReference>
<dbReference type="PROSITE" id="PS01316">
    <property type="entry name" value="ATP_P_PHORIBOSYLTR"/>
    <property type="match status" value="1"/>
</dbReference>
<comment type="function">
    <text evidence="1">Catalyzes the condensation of ATP and 5-phosphoribose 1-diphosphate to form N'-(5'-phosphoribosyl)-ATP (PR-ATP). Has a crucial role in the pathway because the rate of histidine biosynthesis seems to be controlled primarily by regulation of HisG enzymatic activity.</text>
</comment>
<comment type="catalytic activity">
    <reaction evidence="1">
        <text>1-(5-phospho-beta-D-ribosyl)-ATP + diphosphate = 5-phospho-alpha-D-ribose 1-diphosphate + ATP</text>
        <dbReference type="Rhea" id="RHEA:18473"/>
        <dbReference type="ChEBI" id="CHEBI:30616"/>
        <dbReference type="ChEBI" id="CHEBI:33019"/>
        <dbReference type="ChEBI" id="CHEBI:58017"/>
        <dbReference type="ChEBI" id="CHEBI:73183"/>
        <dbReference type="EC" id="2.4.2.17"/>
    </reaction>
</comment>
<comment type="cofactor">
    <cofactor evidence="1">
        <name>Mg(2+)</name>
        <dbReference type="ChEBI" id="CHEBI:18420"/>
    </cofactor>
</comment>
<comment type="activity regulation">
    <text evidence="1">Feedback inhibited by histidine.</text>
</comment>
<comment type="pathway">
    <text evidence="1">Amino-acid biosynthesis; L-histidine biosynthesis; L-histidine from 5-phospho-alpha-D-ribose 1-diphosphate: step 1/9.</text>
</comment>
<comment type="subunit">
    <text evidence="1">Equilibrium between an active dimeric form, an inactive hexameric form and higher aggregates. Interconversion between the various forms is largely reversible and is influenced by the natural substrates and inhibitors of the enzyme.</text>
</comment>
<comment type="subcellular location">
    <subcellularLocation>
        <location evidence="1">Cytoplasm</location>
    </subcellularLocation>
</comment>
<comment type="similarity">
    <text evidence="1">Belongs to the ATP phosphoribosyltransferase family. Long subfamily.</text>
</comment>
<organism>
    <name type="scientific">Escherichia coli O45:K1 (strain S88 / ExPEC)</name>
    <dbReference type="NCBI Taxonomy" id="585035"/>
    <lineage>
        <taxon>Bacteria</taxon>
        <taxon>Pseudomonadati</taxon>
        <taxon>Pseudomonadota</taxon>
        <taxon>Gammaproteobacteria</taxon>
        <taxon>Enterobacterales</taxon>
        <taxon>Enterobacteriaceae</taxon>
        <taxon>Escherichia</taxon>
    </lineage>
</organism>
<sequence>MTDNTRLRIAMQKSGRLSDDSRELLARCGIKINLHTQRLIAMAENMPIDILRVRDDDIPGLVMDGVVDLGIIGENVLEEELLNRRAQGEDPRYFTLRRLDFGGCRLSLATPVDEAWDGPLSLNGKRIATSYPHLLKRYLDQKGISFKSCLLNGSVEVAPRAGLADAICDLVSTGATLEANGLREVEVIYRSKACLIQRDGEMEESKQQLIDKLLTRIQGVIQARESKYIMMHAPTERLDEVIALLPGAERPTILPLAGDQQRVAMHMVSSETLFWETMEKLKALGASSILVLPIEKMME</sequence>
<gene>
    <name evidence="1" type="primary">hisG</name>
    <name type="ordered locus">ECS88_2118</name>
</gene>
<evidence type="ECO:0000255" key="1">
    <source>
        <dbReference type="HAMAP-Rule" id="MF_00079"/>
    </source>
</evidence>
<name>HIS1_ECO45</name>
<reference key="1">
    <citation type="journal article" date="2009" name="PLoS Genet.">
        <title>Organised genome dynamics in the Escherichia coli species results in highly diverse adaptive paths.</title>
        <authorList>
            <person name="Touchon M."/>
            <person name="Hoede C."/>
            <person name="Tenaillon O."/>
            <person name="Barbe V."/>
            <person name="Baeriswyl S."/>
            <person name="Bidet P."/>
            <person name="Bingen E."/>
            <person name="Bonacorsi S."/>
            <person name="Bouchier C."/>
            <person name="Bouvet O."/>
            <person name="Calteau A."/>
            <person name="Chiapello H."/>
            <person name="Clermont O."/>
            <person name="Cruveiller S."/>
            <person name="Danchin A."/>
            <person name="Diard M."/>
            <person name="Dossat C."/>
            <person name="Karoui M.E."/>
            <person name="Frapy E."/>
            <person name="Garry L."/>
            <person name="Ghigo J.M."/>
            <person name="Gilles A.M."/>
            <person name="Johnson J."/>
            <person name="Le Bouguenec C."/>
            <person name="Lescat M."/>
            <person name="Mangenot S."/>
            <person name="Martinez-Jehanne V."/>
            <person name="Matic I."/>
            <person name="Nassif X."/>
            <person name="Oztas S."/>
            <person name="Petit M.A."/>
            <person name="Pichon C."/>
            <person name="Rouy Z."/>
            <person name="Ruf C.S."/>
            <person name="Schneider D."/>
            <person name="Tourret J."/>
            <person name="Vacherie B."/>
            <person name="Vallenet D."/>
            <person name="Medigue C."/>
            <person name="Rocha E.P.C."/>
            <person name="Denamur E."/>
        </authorList>
    </citation>
    <scope>NUCLEOTIDE SEQUENCE [LARGE SCALE GENOMIC DNA]</scope>
    <source>
        <strain>S88 / ExPEC</strain>
    </source>
</reference>
<feature type="chain" id="PRO_1000117088" description="ATP phosphoribosyltransferase">
    <location>
        <begin position="1"/>
        <end position="299"/>
    </location>
</feature>
<protein>
    <recommendedName>
        <fullName evidence="1">ATP phosphoribosyltransferase</fullName>
        <shortName evidence="1">ATP-PRT</shortName>
        <shortName evidence="1">ATP-PRTase</shortName>
        <ecNumber evidence="1">2.4.2.17</ecNumber>
    </recommendedName>
</protein>
<proteinExistence type="inferred from homology"/>
<accession>B7MDH3</accession>
<keyword id="KW-0028">Amino-acid biosynthesis</keyword>
<keyword id="KW-0067">ATP-binding</keyword>
<keyword id="KW-0963">Cytoplasm</keyword>
<keyword id="KW-0328">Glycosyltransferase</keyword>
<keyword id="KW-0368">Histidine biosynthesis</keyword>
<keyword id="KW-0460">Magnesium</keyword>
<keyword id="KW-0479">Metal-binding</keyword>
<keyword id="KW-0547">Nucleotide-binding</keyword>
<keyword id="KW-1185">Reference proteome</keyword>
<keyword id="KW-0808">Transferase</keyword>